<evidence type="ECO:0000255" key="1">
    <source>
        <dbReference type="HAMAP-Rule" id="MF_00117"/>
    </source>
</evidence>
<name>HSLO_CLOB6</name>
<gene>
    <name evidence="1" type="primary">hslO</name>
    <name type="ordered locus">CLJ_B3415</name>
</gene>
<proteinExistence type="inferred from homology"/>
<protein>
    <recommendedName>
        <fullName evidence="1">33 kDa chaperonin</fullName>
    </recommendedName>
    <alternativeName>
        <fullName evidence="1">Heat shock protein 33 homolog</fullName>
        <shortName evidence="1">HSP33</shortName>
    </alternativeName>
</protein>
<comment type="function">
    <text evidence="1">Redox regulated molecular chaperone. Protects both thermally unfolding and oxidatively damaged proteins from irreversible aggregation. Plays an important role in the bacterial defense system toward oxidative stress.</text>
</comment>
<comment type="subcellular location">
    <subcellularLocation>
        <location evidence="1">Cytoplasm</location>
    </subcellularLocation>
</comment>
<comment type="PTM">
    <text evidence="1">Under oxidizing conditions two disulfide bonds are formed involving the reactive cysteines. Under reducing conditions zinc is bound to the reactive cysteines and the protein is inactive.</text>
</comment>
<comment type="similarity">
    <text evidence="1">Belongs to the HSP33 family.</text>
</comment>
<reference key="1">
    <citation type="submission" date="2008-05" db="EMBL/GenBank/DDBJ databases">
        <title>Genome sequence of Clostridium botulinum Ba4 strain 657.</title>
        <authorList>
            <person name="Shrivastava S."/>
            <person name="Brown J.L."/>
            <person name="Bruce D."/>
            <person name="Detter C."/>
            <person name="Munk C."/>
            <person name="Smith L.A."/>
            <person name="Smith T.J."/>
            <person name="Sutton G."/>
            <person name="Brettin T.S."/>
        </authorList>
    </citation>
    <scope>NUCLEOTIDE SEQUENCE [LARGE SCALE GENOMIC DNA]</scope>
    <source>
        <strain>657 / Type Ba4</strain>
    </source>
</reference>
<accession>C3KTK5</accession>
<dbReference type="EMBL" id="CP001083">
    <property type="protein sequence ID" value="ACQ54694.1"/>
    <property type="molecule type" value="Genomic_DNA"/>
</dbReference>
<dbReference type="RefSeq" id="WP_003361571.1">
    <property type="nucleotide sequence ID" value="NC_012658.1"/>
</dbReference>
<dbReference type="SMR" id="C3KTK5"/>
<dbReference type="KEGG" id="cbi:CLJ_B3415"/>
<dbReference type="HOGENOM" id="CLU_054493_1_0_9"/>
<dbReference type="Proteomes" id="UP000002333">
    <property type="component" value="Chromosome"/>
</dbReference>
<dbReference type="GO" id="GO:0005737">
    <property type="term" value="C:cytoplasm"/>
    <property type="evidence" value="ECO:0007669"/>
    <property type="project" value="UniProtKB-SubCell"/>
</dbReference>
<dbReference type="GO" id="GO:0044183">
    <property type="term" value="F:protein folding chaperone"/>
    <property type="evidence" value="ECO:0007669"/>
    <property type="project" value="TreeGrafter"/>
</dbReference>
<dbReference type="GO" id="GO:0051082">
    <property type="term" value="F:unfolded protein binding"/>
    <property type="evidence" value="ECO:0007669"/>
    <property type="project" value="UniProtKB-UniRule"/>
</dbReference>
<dbReference type="GO" id="GO:0042026">
    <property type="term" value="P:protein refolding"/>
    <property type="evidence" value="ECO:0007669"/>
    <property type="project" value="TreeGrafter"/>
</dbReference>
<dbReference type="CDD" id="cd00498">
    <property type="entry name" value="Hsp33"/>
    <property type="match status" value="1"/>
</dbReference>
<dbReference type="Gene3D" id="3.55.30.10">
    <property type="entry name" value="Hsp33 domain"/>
    <property type="match status" value="1"/>
</dbReference>
<dbReference type="Gene3D" id="3.90.1280.10">
    <property type="entry name" value="HSP33 redox switch-like"/>
    <property type="match status" value="1"/>
</dbReference>
<dbReference type="HAMAP" id="MF_00117">
    <property type="entry name" value="HslO"/>
    <property type="match status" value="1"/>
</dbReference>
<dbReference type="InterPro" id="IPR000397">
    <property type="entry name" value="Heat_shock_Hsp33"/>
</dbReference>
<dbReference type="InterPro" id="IPR016154">
    <property type="entry name" value="Heat_shock_Hsp33_C"/>
</dbReference>
<dbReference type="InterPro" id="IPR016153">
    <property type="entry name" value="Heat_shock_Hsp33_N"/>
</dbReference>
<dbReference type="NCBIfam" id="NF001033">
    <property type="entry name" value="PRK00114.1"/>
    <property type="match status" value="1"/>
</dbReference>
<dbReference type="PANTHER" id="PTHR30111">
    <property type="entry name" value="33 KDA CHAPERONIN"/>
    <property type="match status" value="1"/>
</dbReference>
<dbReference type="PANTHER" id="PTHR30111:SF1">
    <property type="entry name" value="33 KDA CHAPERONIN"/>
    <property type="match status" value="1"/>
</dbReference>
<dbReference type="Pfam" id="PF01430">
    <property type="entry name" value="HSP33"/>
    <property type="match status" value="1"/>
</dbReference>
<dbReference type="PIRSF" id="PIRSF005261">
    <property type="entry name" value="Heat_shock_Hsp33"/>
    <property type="match status" value="1"/>
</dbReference>
<dbReference type="SUPFAM" id="SSF64397">
    <property type="entry name" value="Hsp33 domain"/>
    <property type="match status" value="1"/>
</dbReference>
<dbReference type="SUPFAM" id="SSF118352">
    <property type="entry name" value="HSP33 redox switch-like"/>
    <property type="match status" value="1"/>
</dbReference>
<sequence>MKDKLVKAIAKDGQVRIIGAITTELVNEGVKLHNCAPTAAAALGRMLTAGALMGTTLKSEKDTLTLQIHGGGIAKGVVVTSYADGHVKGYIGNPTADIEPNSKGKLDVSGIIGKNGNLLVIRDMGLKEPYIGQVPIYTGEIGEDLAYYYTVSEQTPSAVGLGVLVDKDLSIKSAGGFIIQMMPGADEMLADLISYRLEEIPSITEMISKGMTIEEILEYIFEDMDLNILESIVPEYRCDCSREKVERALASIGQKDLKEIYDEGKEEELKCHFCNKAYTFSHDEIGDILESYYNEK</sequence>
<keyword id="KW-0143">Chaperone</keyword>
<keyword id="KW-0963">Cytoplasm</keyword>
<keyword id="KW-1015">Disulfide bond</keyword>
<keyword id="KW-0676">Redox-active center</keyword>
<keyword id="KW-0862">Zinc</keyword>
<feature type="chain" id="PRO_1000202993" description="33 kDa chaperonin">
    <location>
        <begin position="1"/>
        <end position="296"/>
    </location>
</feature>
<feature type="disulfide bond" description="Redox-active" evidence="1">
    <location>
        <begin position="238"/>
        <end position="240"/>
    </location>
</feature>
<feature type="disulfide bond" description="Redox-active" evidence="1">
    <location>
        <begin position="271"/>
        <end position="274"/>
    </location>
</feature>
<organism>
    <name type="scientific">Clostridium botulinum (strain 657 / Type Ba4)</name>
    <dbReference type="NCBI Taxonomy" id="515621"/>
    <lineage>
        <taxon>Bacteria</taxon>
        <taxon>Bacillati</taxon>
        <taxon>Bacillota</taxon>
        <taxon>Clostridia</taxon>
        <taxon>Eubacteriales</taxon>
        <taxon>Clostridiaceae</taxon>
        <taxon>Clostridium</taxon>
    </lineage>
</organism>